<dbReference type="EC" id="1.8.1.2" evidence="1"/>
<dbReference type="EMBL" id="BA000031">
    <property type="protein sequence ID" value="BAC60984.1"/>
    <property type="molecule type" value="Genomic_DNA"/>
</dbReference>
<dbReference type="RefSeq" id="NP_799100.1">
    <property type="nucleotide sequence ID" value="NC_004603.1"/>
</dbReference>
<dbReference type="RefSeq" id="WP_005455813.1">
    <property type="nucleotide sequence ID" value="NC_004603.1"/>
</dbReference>
<dbReference type="SMR" id="Q87L91"/>
<dbReference type="GeneID" id="1190271"/>
<dbReference type="KEGG" id="vpa:VP2721"/>
<dbReference type="PATRIC" id="fig|223926.6.peg.2619"/>
<dbReference type="eggNOG" id="COG0155">
    <property type="taxonomic scope" value="Bacteria"/>
</dbReference>
<dbReference type="HOGENOM" id="CLU_001975_3_2_6"/>
<dbReference type="UniPathway" id="UPA00140">
    <property type="reaction ID" value="UER00207"/>
</dbReference>
<dbReference type="Proteomes" id="UP000002493">
    <property type="component" value="Chromosome 1"/>
</dbReference>
<dbReference type="GO" id="GO:0009337">
    <property type="term" value="C:sulfite reductase complex (NADPH)"/>
    <property type="evidence" value="ECO:0007669"/>
    <property type="project" value="InterPro"/>
</dbReference>
<dbReference type="GO" id="GO:0051539">
    <property type="term" value="F:4 iron, 4 sulfur cluster binding"/>
    <property type="evidence" value="ECO:0007669"/>
    <property type="project" value="UniProtKB-KW"/>
</dbReference>
<dbReference type="GO" id="GO:0020037">
    <property type="term" value="F:heme binding"/>
    <property type="evidence" value="ECO:0007669"/>
    <property type="project" value="InterPro"/>
</dbReference>
<dbReference type="GO" id="GO:0046872">
    <property type="term" value="F:metal ion binding"/>
    <property type="evidence" value="ECO:0007669"/>
    <property type="project" value="UniProtKB-KW"/>
</dbReference>
<dbReference type="GO" id="GO:0050661">
    <property type="term" value="F:NADP binding"/>
    <property type="evidence" value="ECO:0007669"/>
    <property type="project" value="InterPro"/>
</dbReference>
<dbReference type="GO" id="GO:0050311">
    <property type="term" value="F:sulfite reductase (ferredoxin) activity"/>
    <property type="evidence" value="ECO:0007669"/>
    <property type="project" value="TreeGrafter"/>
</dbReference>
<dbReference type="GO" id="GO:0004783">
    <property type="term" value="F:sulfite reductase (NADPH) activity"/>
    <property type="evidence" value="ECO:0007669"/>
    <property type="project" value="UniProtKB-UniRule"/>
</dbReference>
<dbReference type="GO" id="GO:0019344">
    <property type="term" value="P:cysteine biosynthetic process"/>
    <property type="evidence" value="ECO:0007669"/>
    <property type="project" value="UniProtKB-KW"/>
</dbReference>
<dbReference type="GO" id="GO:0070814">
    <property type="term" value="P:hydrogen sulfide biosynthetic process"/>
    <property type="evidence" value="ECO:0007669"/>
    <property type="project" value="UniProtKB-UniRule"/>
</dbReference>
<dbReference type="GO" id="GO:0000103">
    <property type="term" value="P:sulfate assimilation"/>
    <property type="evidence" value="ECO:0007669"/>
    <property type="project" value="UniProtKB-UniRule"/>
</dbReference>
<dbReference type="FunFam" id="3.30.413.10:FF:000003">
    <property type="entry name" value="Sulfite reductase [NADPH] hemoprotein beta-component"/>
    <property type="match status" value="1"/>
</dbReference>
<dbReference type="FunFam" id="3.30.413.10:FF:000004">
    <property type="entry name" value="Sulfite reductase [NADPH] hemoprotein beta-component"/>
    <property type="match status" value="1"/>
</dbReference>
<dbReference type="Gene3D" id="3.30.413.10">
    <property type="entry name" value="Sulfite Reductase Hemoprotein, domain 1"/>
    <property type="match status" value="2"/>
</dbReference>
<dbReference type="HAMAP" id="MF_01540">
    <property type="entry name" value="CysI"/>
    <property type="match status" value="1"/>
</dbReference>
<dbReference type="InterPro" id="IPR011786">
    <property type="entry name" value="CysI"/>
</dbReference>
<dbReference type="InterPro" id="IPR005117">
    <property type="entry name" value="NiRdtase/SiRdtase_haem-b_fer"/>
</dbReference>
<dbReference type="InterPro" id="IPR036136">
    <property type="entry name" value="Nit/Sulf_reduc_fer-like_dom_sf"/>
</dbReference>
<dbReference type="InterPro" id="IPR006067">
    <property type="entry name" value="NO2/SO3_Rdtase_4Fe4S_dom"/>
</dbReference>
<dbReference type="InterPro" id="IPR045169">
    <property type="entry name" value="NO2/SO3_Rdtase_4Fe4S_prot"/>
</dbReference>
<dbReference type="InterPro" id="IPR045854">
    <property type="entry name" value="NO2/SO3_Rdtase_4Fe4S_sf"/>
</dbReference>
<dbReference type="InterPro" id="IPR006066">
    <property type="entry name" value="NO2/SO3_Rdtase_FeS/sirohaem_BS"/>
</dbReference>
<dbReference type="NCBIfam" id="TIGR02041">
    <property type="entry name" value="CysI"/>
    <property type="match status" value="1"/>
</dbReference>
<dbReference type="NCBIfam" id="NF010029">
    <property type="entry name" value="PRK13504.1"/>
    <property type="match status" value="1"/>
</dbReference>
<dbReference type="PANTHER" id="PTHR11493:SF47">
    <property type="entry name" value="SULFITE REDUCTASE [NADPH] SUBUNIT BETA"/>
    <property type="match status" value="1"/>
</dbReference>
<dbReference type="PANTHER" id="PTHR11493">
    <property type="entry name" value="SULFITE REDUCTASE [NADPH] SUBUNIT BETA-RELATED"/>
    <property type="match status" value="1"/>
</dbReference>
<dbReference type="Pfam" id="PF01077">
    <property type="entry name" value="NIR_SIR"/>
    <property type="match status" value="1"/>
</dbReference>
<dbReference type="Pfam" id="PF03460">
    <property type="entry name" value="NIR_SIR_ferr"/>
    <property type="match status" value="2"/>
</dbReference>
<dbReference type="PRINTS" id="PR00397">
    <property type="entry name" value="SIROHAEM"/>
</dbReference>
<dbReference type="SUPFAM" id="SSF56014">
    <property type="entry name" value="Nitrite and sulphite reductase 4Fe-4S domain-like"/>
    <property type="match status" value="2"/>
</dbReference>
<dbReference type="SUPFAM" id="SSF55124">
    <property type="entry name" value="Nitrite/Sulfite reductase N-terminal domain-like"/>
    <property type="match status" value="2"/>
</dbReference>
<dbReference type="PROSITE" id="PS00365">
    <property type="entry name" value="NIR_SIR"/>
    <property type="match status" value="1"/>
</dbReference>
<evidence type="ECO:0000255" key="1">
    <source>
        <dbReference type="HAMAP-Rule" id="MF_01540"/>
    </source>
</evidence>
<sequence>MTFSTENNKQIVLGEELGPLSDNERLKKQSNLLRGTIAEDLQDRITGGFTADNFQLIRFHGMYQQDDRDIRNERTKQKLEPLHNVMLRARMPGGIITPTQWLAIDKFATEHSLYGSIRLTTRQTFQFHGVLKPNIKLMHQTLNNIGIDSIATAGDVNRNVLCTTNPVESELHQEAYEWAKKISEHLLPKTRAYAEIWLDGEKVESTEEDEPILGKTYLPRKFKTTVVIPPQNDVDVHANDLNFVAIADNGKLVGFNVLVGGGLAMTHGDTSTYPRRADDFGFIPLEKTLDVAAAVVTTQRDWGNRSNRKNAKTKYTLDRVGTDVFKAEVEKRAGIQFEASRPYEFTERGDRIGWVEGIDGKFHLALFIENGRLLDYPGKPLKTGVAEIAKIHKGDFRMTANQNLIVAGVPKSEKAKIEKIAREHGLMDDNVSEQRKNSMACVAFPTCPLAMAEAERFLPQFVTDVEGILEKHGLPENDNIILRVTGCPNGCGRAMLAEIGLVGKAPGRYNLHLGGNRAGTRVPKMYKENITDKQILEEIDLLVARWSKEREEGEAFGDFTIRAGIIQEVFVSKRDFYA</sequence>
<feature type="chain" id="PRO_0000199914" description="Sulfite reductase [NADPH] hemoprotein beta-component">
    <location>
        <begin position="1"/>
        <end position="578"/>
    </location>
</feature>
<feature type="binding site" evidence="1">
    <location>
        <position position="441"/>
    </location>
    <ligand>
        <name>[4Fe-4S] cluster</name>
        <dbReference type="ChEBI" id="CHEBI:49883"/>
    </ligand>
</feature>
<feature type="binding site" evidence="1">
    <location>
        <position position="447"/>
    </location>
    <ligand>
        <name>[4Fe-4S] cluster</name>
        <dbReference type="ChEBI" id="CHEBI:49883"/>
    </ligand>
</feature>
<feature type="binding site" evidence="1">
    <location>
        <position position="487"/>
    </location>
    <ligand>
        <name>[4Fe-4S] cluster</name>
        <dbReference type="ChEBI" id="CHEBI:49883"/>
    </ligand>
</feature>
<feature type="binding site" evidence="1">
    <location>
        <position position="491"/>
    </location>
    <ligand>
        <name>[4Fe-4S] cluster</name>
        <dbReference type="ChEBI" id="CHEBI:49883"/>
    </ligand>
</feature>
<feature type="binding site" description="axial binding residue" evidence="1">
    <location>
        <position position="491"/>
    </location>
    <ligand>
        <name>siroheme</name>
        <dbReference type="ChEBI" id="CHEBI:60052"/>
    </ligand>
    <ligandPart>
        <name>Fe</name>
        <dbReference type="ChEBI" id="CHEBI:18248"/>
    </ligandPart>
</feature>
<proteinExistence type="inferred from homology"/>
<name>CYSI_VIBPA</name>
<reference key="1">
    <citation type="journal article" date="2003" name="Lancet">
        <title>Genome sequence of Vibrio parahaemolyticus: a pathogenic mechanism distinct from that of V. cholerae.</title>
        <authorList>
            <person name="Makino K."/>
            <person name="Oshima K."/>
            <person name="Kurokawa K."/>
            <person name="Yokoyama K."/>
            <person name="Uda T."/>
            <person name="Tagomori K."/>
            <person name="Iijima Y."/>
            <person name="Najima M."/>
            <person name="Nakano M."/>
            <person name="Yamashita A."/>
            <person name="Kubota Y."/>
            <person name="Kimura S."/>
            <person name="Yasunaga T."/>
            <person name="Honda T."/>
            <person name="Shinagawa H."/>
            <person name="Hattori M."/>
            <person name="Iida T."/>
        </authorList>
    </citation>
    <scope>NUCLEOTIDE SEQUENCE [LARGE SCALE GENOMIC DNA]</scope>
    <source>
        <strain>RIMD 2210633</strain>
    </source>
</reference>
<protein>
    <recommendedName>
        <fullName evidence="1">Sulfite reductase [NADPH] hemoprotein beta-component</fullName>
        <shortName evidence="1">SiR-HP</shortName>
        <shortName evidence="1">SiRHP</shortName>
        <ecNumber evidence="1">1.8.1.2</ecNumber>
    </recommendedName>
</protein>
<comment type="function">
    <text evidence="1">Component of the sulfite reductase complex that catalyzes the 6-electron reduction of sulfite to sulfide. This is one of several activities required for the biosynthesis of L-cysteine from sulfate.</text>
</comment>
<comment type="catalytic activity">
    <reaction evidence="1">
        <text>hydrogen sulfide + 3 NADP(+) + 3 H2O = sulfite + 3 NADPH + 4 H(+)</text>
        <dbReference type="Rhea" id="RHEA:13801"/>
        <dbReference type="ChEBI" id="CHEBI:15377"/>
        <dbReference type="ChEBI" id="CHEBI:15378"/>
        <dbReference type="ChEBI" id="CHEBI:17359"/>
        <dbReference type="ChEBI" id="CHEBI:29919"/>
        <dbReference type="ChEBI" id="CHEBI:57783"/>
        <dbReference type="ChEBI" id="CHEBI:58349"/>
        <dbReference type="EC" id="1.8.1.2"/>
    </reaction>
</comment>
<comment type="cofactor">
    <cofactor evidence="1">
        <name>siroheme</name>
        <dbReference type="ChEBI" id="CHEBI:60052"/>
    </cofactor>
    <text evidence="1">Binds 1 siroheme per subunit.</text>
</comment>
<comment type="cofactor">
    <cofactor evidence="1">
        <name>[4Fe-4S] cluster</name>
        <dbReference type="ChEBI" id="CHEBI:49883"/>
    </cofactor>
    <text evidence="1">Binds 1 [4Fe-4S] cluster per subunit.</text>
</comment>
<comment type="pathway">
    <text evidence="1">Sulfur metabolism; hydrogen sulfide biosynthesis; hydrogen sulfide from sulfite (NADPH route): step 1/1.</text>
</comment>
<comment type="subunit">
    <text evidence="1">Alpha(8)-beta(8). The alpha component is a flavoprotein, the beta component is a hemoprotein.</text>
</comment>
<comment type="similarity">
    <text evidence="1">Belongs to the nitrite and sulfite reductase 4Fe-4S domain family.</text>
</comment>
<organism>
    <name type="scientific">Vibrio parahaemolyticus serotype O3:K6 (strain RIMD 2210633)</name>
    <dbReference type="NCBI Taxonomy" id="223926"/>
    <lineage>
        <taxon>Bacteria</taxon>
        <taxon>Pseudomonadati</taxon>
        <taxon>Pseudomonadota</taxon>
        <taxon>Gammaproteobacteria</taxon>
        <taxon>Vibrionales</taxon>
        <taxon>Vibrionaceae</taxon>
        <taxon>Vibrio</taxon>
    </lineage>
</organism>
<gene>
    <name evidence="1" type="primary">cysI</name>
    <name type="ordered locus">VP2721</name>
</gene>
<keyword id="KW-0004">4Fe-4S</keyword>
<keyword id="KW-0028">Amino-acid biosynthesis</keyword>
<keyword id="KW-0198">Cysteine biosynthesis</keyword>
<keyword id="KW-0349">Heme</keyword>
<keyword id="KW-0408">Iron</keyword>
<keyword id="KW-0411">Iron-sulfur</keyword>
<keyword id="KW-0479">Metal-binding</keyword>
<keyword id="KW-0521">NADP</keyword>
<keyword id="KW-0560">Oxidoreductase</keyword>
<accession>Q87L91</accession>